<comment type="function">
    <text evidence="1">Peptide chain release factor 1 directs the termination of translation in response to the peptide chain termination codons UAG and UAA.</text>
</comment>
<comment type="subcellular location">
    <subcellularLocation>
        <location evidence="1">Cytoplasm</location>
    </subcellularLocation>
</comment>
<comment type="PTM">
    <text evidence="1">Methylated by PrmC. Methylation increases the termination efficiency of RF1.</text>
</comment>
<comment type="similarity">
    <text evidence="1">Belongs to the prokaryotic/mitochondrial release factor family.</text>
</comment>
<sequence length="352" mass="39672">MSILAEKLSSILKRYDELTALLSSAEVINDIKKLTELSKEQSSIEEISVASKEYLSVLENIKENKELLEDKELSELAKEELKILEIKKSELETTIKQLLIPKDPNDDKNIYLELRAGTGGDEAGIFVGDLFKAYCRYADLKKWKVEIVSSSENSVGGYKEIIALIKGKGVYSRLKFEAGTHRVQRVPETESQGRIHTSAITVAIMPEVDDVEISINPSDLKIEVFRAGGHGGQCVNTTDSAVRITHLPTNISVSMQDEKSQHKNKDKALKILKARLYEKQIEEQQLANAKDRKEQVGSGDRSERIRTYNYPQNRLSEHRINLTLYSLEEIMLSGNLDEVINPLIAHAQSQFE</sequence>
<gene>
    <name evidence="1" type="primary">prfA</name>
    <name type="ordered locus">Hac_1526</name>
</gene>
<reference key="1">
    <citation type="journal article" date="2006" name="PLoS Genet.">
        <title>Who ate whom? Adaptive Helicobacter genomic changes that accompanied a host jump from early humans to large felines.</title>
        <authorList>
            <person name="Eppinger M."/>
            <person name="Baar C."/>
            <person name="Linz B."/>
            <person name="Raddatz G."/>
            <person name="Lanz C."/>
            <person name="Keller H."/>
            <person name="Morelli G."/>
            <person name="Gressmann H."/>
            <person name="Achtman M."/>
            <person name="Schuster S.C."/>
        </authorList>
    </citation>
    <scope>NUCLEOTIDE SEQUENCE [LARGE SCALE GENOMIC DNA]</scope>
    <source>
        <strain>Sheeba</strain>
    </source>
</reference>
<protein>
    <recommendedName>
        <fullName evidence="1">Peptide chain release factor 1</fullName>
        <shortName evidence="1">RF-1</shortName>
    </recommendedName>
</protein>
<evidence type="ECO:0000255" key="1">
    <source>
        <dbReference type="HAMAP-Rule" id="MF_00093"/>
    </source>
</evidence>
<evidence type="ECO:0000256" key="2">
    <source>
        <dbReference type="SAM" id="MobiDB-lite"/>
    </source>
</evidence>
<name>RF1_HELAH</name>
<dbReference type="EMBL" id="AM260522">
    <property type="protein sequence ID" value="CAK00245.1"/>
    <property type="molecule type" value="Genomic_DNA"/>
</dbReference>
<dbReference type="RefSeq" id="WP_011578332.1">
    <property type="nucleotide sequence ID" value="NC_008229.1"/>
</dbReference>
<dbReference type="SMR" id="Q17VT1"/>
<dbReference type="STRING" id="382638.Hac_1526"/>
<dbReference type="GeneID" id="31758795"/>
<dbReference type="KEGG" id="hac:Hac_1526"/>
<dbReference type="eggNOG" id="COG0216">
    <property type="taxonomic scope" value="Bacteria"/>
</dbReference>
<dbReference type="HOGENOM" id="CLU_036856_0_1_7"/>
<dbReference type="OrthoDB" id="9806673at2"/>
<dbReference type="BioCyc" id="HACI382638:HAC_RS06470-MONOMER"/>
<dbReference type="Proteomes" id="UP000000775">
    <property type="component" value="Chromosome"/>
</dbReference>
<dbReference type="GO" id="GO:0005737">
    <property type="term" value="C:cytoplasm"/>
    <property type="evidence" value="ECO:0007669"/>
    <property type="project" value="UniProtKB-SubCell"/>
</dbReference>
<dbReference type="GO" id="GO:0016149">
    <property type="term" value="F:translation release factor activity, codon specific"/>
    <property type="evidence" value="ECO:0007669"/>
    <property type="project" value="UniProtKB-UniRule"/>
</dbReference>
<dbReference type="FunFam" id="3.30.160.20:FF:000004">
    <property type="entry name" value="Peptide chain release factor 1"/>
    <property type="match status" value="1"/>
</dbReference>
<dbReference type="FunFam" id="3.30.70.1660:FF:000002">
    <property type="entry name" value="Peptide chain release factor 1"/>
    <property type="match status" value="1"/>
</dbReference>
<dbReference type="FunFam" id="3.30.70.1660:FF:000004">
    <property type="entry name" value="Peptide chain release factor 1"/>
    <property type="match status" value="1"/>
</dbReference>
<dbReference type="Gene3D" id="3.30.160.20">
    <property type="match status" value="1"/>
</dbReference>
<dbReference type="Gene3D" id="3.30.70.1660">
    <property type="match status" value="1"/>
</dbReference>
<dbReference type="Gene3D" id="6.10.140.1950">
    <property type="match status" value="1"/>
</dbReference>
<dbReference type="HAMAP" id="MF_00093">
    <property type="entry name" value="Rel_fac_1"/>
    <property type="match status" value="1"/>
</dbReference>
<dbReference type="InterPro" id="IPR005139">
    <property type="entry name" value="PCRF"/>
</dbReference>
<dbReference type="InterPro" id="IPR000352">
    <property type="entry name" value="Pep_chain_release_fac_I"/>
</dbReference>
<dbReference type="InterPro" id="IPR045853">
    <property type="entry name" value="Pep_chain_release_fac_I_sf"/>
</dbReference>
<dbReference type="InterPro" id="IPR050057">
    <property type="entry name" value="Prokaryotic/Mito_RF"/>
</dbReference>
<dbReference type="InterPro" id="IPR004373">
    <property type="entry name" value="RF-1"/>
</dbReference>
<dbReference type="NCBIfam" id="TIGR00019">
    <property type="entry name" value="prfA"/>
    <property type="match status" value="1"/>
</dbReference>
<dbReference type="NCBIfam" id="NF001859">
    <property type="entry name" value="PRK00591.1"/>
    <property type="match status" value="1"/>
</dbReference>
<dbReference type="PANTHER" id="PTHR43804">
    <property type="entry name" value="LD18447P"/>
    <property type="match status" value="1"/>
</dbReference>
<dbReference type="PANTHER" id="PTHR43804:SF7">
    <property type="entry name" value="LD18447P"/>
    <property type="match status" value="1"/>
</dbReference>
<dbReference type="Pfam" id="PF03462">
    <property type="entry name" value="PCRF"/>
    <property type="match status" value="1"/>
</dbReference>
<dbReference type="Pfam" id="PF00472">
    <property type="entry name" value="RF-1"/>
    <property type="match status" value="1"/>
</dbReference>
<dbReference type="SMART" id="SM00937">
    <property type="entry name" value="PCRF"/>
    <property type="match status" value="1"/>
</dbReference>
<dbReference type="SUPFAM" id="SSF75620">
    <property type="entry name" value="Release factor"/>
    <property type="match status" value="1"/>
</dbReference>
<dbReference type="PROSITE" id="PS00745">
    <property type="entry name" value="RF_PROK_I"/>
    <property type="match status" value="1"/>
</dbReference>
<keyword id="KW-0963">Cytoplasm</keyword>
<keyword id="KW-0488">Methylation</keyword>
<keyword id="KW-0648">Protein biosynthesis</keyword>
<proteinExistence type="inferred from homology"/>
<feature type="chain" id="PRO_1000004897" description="Peptide chain release factor 1">
    <location>
        <begin position="1"/>
        <end position="352"/>
    </location>
</feature>
<feature type="region of interest" description="Disordered" evidence="2">
    <location>
        <begin position="288"/>
        <end position="309"/>
    </location>
</feature>
<feature type="compositionally biased region" description="Basic and acidic residues" evidence="2">
    <location>
        <begin position="289"/>
        <end position="306"/>
    </location>
</feature>
<feature type="modified residue" description="N5-methylglutamine" evidence="1">
    <location>
        <position position="233"/>
    </location>
</feature>
<organism>
    <name type="scientific">Helicobacter acinonychis (strain Sheeba)</name>
    <dbReference type="NCBI Taxonomy" id="382638"/>
    <lineage>
        <taxon>Bacteria</taxon>
        <taxon>Pseudomonadati</taxon>
        <taxon>Campylobacterota</taxon>
        <taxon>Epsilonproteobacteria</taxon>
        <taxon>Campylobacterales</taxon>
        <taxon>Helicobacteraceae</taxon>
        <taxon>Helicobacter</taxon>
    </lineage>
</organism>
<accession>Q17VT1</accession>